<reference key="1">
    <citation type="journal article" date="2009" name="Genome Biol.">
        <title>Genomic and genetic analyses of diversity and plant interactions of Pseudomonas fluorescens.</title>
        <authorList>
            <person name="Silby M.W."/>
            <person name="Cerdeno-Tarraga A.M."/>
            <person name="Vernikos G.S."/>
            <person name="Giddens S.R."/>
            <person name="Jackson R.W."/>
            <person name="Preston G.M."/>
            <person name="Zhang X.-X."/>
            <person name="Moon C.D."/>
            <person name="Gehrig S.M."/>
            <person name="Godfrey S.A.C."/>
            <person name="Knight C.G."/>
            <person name="Malone J.G."/>
            <person name="Robinson Z."/>
            <person name="Spiers A.J."/>
            <person name="Harris S."/>
            <person name="Challis G.L."/>
            <person name="Yaxley A.M."/>
            <person name="Harris D."/>
            <person name="Seeger K."/>
            <person name="Murphy L."/>
            <person name="Rutter S."/>
            <person name="Squares R."/>
            <person name="Quail M.A."/>
            <person name="Saunders E."/>
            <person name="Mavromatis K."/>
            <person name="Brettin T.S."/>
            <person name="Bentley S.D."/>
            <person name="Hothersall J."/>
            <person name="Stephens E."/>
            <person name="Thomas C.M."/>
            <person name="Parkhill J."/>
            <person name="Levy S.B."/>
            <person name="Rainey P.B."/>
            <person name="Thomson N.R."/>
        </authorList>
    </citation>
    <scope>NUCLEOTIDE SEQUENCE [LARGE SCALE GENOMIC DNA]</scope>
    <source>
        <strain>SBW25</strain>
    </source>
</reference>
<name>ISPG_PSEFS</name>
<proteinExistence type="inferred from homology"/>
<feature type="chain" id="PRO_1000203510" description="4-hydroxy-3-methylbut-2-en-1-yl diphosphate synthase (flavodoxin)">
    <location>
        <begin position="1"/>
        <end position="369"/>
    </location>
</feature>
<feature type="binding site" evidence="1">
    <location>
        <position position="270"/>
    </location>
    <ligand>
        <name>[4Fe-4S] cluster</name>
        <dbReference type="ChEBI" id="CHEBI:49883"/>
    </ligand>
</feature>
<feature type="binding site" evidence="1">
    <location>
        <position position="273"/>
    </location>
    <ligand>
        <name>[4Fe-4S] cluster</name>
        <dbReference type="ChEBI" id="CHEBI:49883"/>
    </ligand>
</feature>
<feature type="binding site" evidence="1">
    <location>
        <position position="305"/>
    </location>
    <ligand>
        <name>[4Fe-4S] cluster</name>
        <dbReference type="ChEBI" id="CHEBI:49883"/>
    </ligand>
</feature>
<feature type="binding site" evidence="1">
    <location>
        <position position="312"/>
    </location>
    <ligand>
        <name>[4Fe-4S] cluster</name>
        <dbReference type="ChEBI" id="CHEBI:49883"/>
    </ligand>
</feature>
<organism>
    <name type="scientific">Pseudomonas fluorescens (strain SBW25)</name>
    <dbReference type="NCBI Taxonomy" id="216595"/>
    <lineage>
        <taxon>Bacteria</taxon>
        <taxon>Pseudomonadati</taxon>
        <taxon>Pseudomonadota</taxon>
        <taxon>Gammaproteobacteria</taxon>
        <taxon>Pseudomonadales</taxon>
        <taxon>Pseudomonadaceae</taxon>
        <taxon>Pseudomonas</taxon>
    </lineage>
</organism>
<gene>
    <name evidence="1" type="primary">ispG</name>
    <name type="ordered locus">PFLU_5057</name>
</gene>
<sequence length="369" mass="39685">MHGESPIKRRVSRKIWVGSVPVGGDAPIAVQSMTNSDTNDVAATVAQINRLEAAGVDIVRVSVPDMDAAEAFGRIKQLVKVPLVADIHFDYKIALRVAELGVDCLRINPGNIGREDRVRAVVDAARDRGIPIRIGVNAGSLEKDLQKKYGEPTPAALVESALRHVEHLERLNFQDFKVSVKASDVFMAVEAYRLLAKEIVQPLHLGITEAGGLRSGTVKSAVGLGMLLAEGIGDTIRISLAADPVEEVKVGYDILKSLHLRSRGINFIACPSCSRQNFDVVKTMNELEVRLEDLLVPLDVAVIGCVVNGPGEAKEAHVGLTGGTPNLIYIDGKPSQKLTNDNLVDELERLIREKAAQKVAADAALIARG</sequence>
<dbReference type="EC" id="1.17.7.3" evidence="1"/>
<dbReference type="EMBL" id="AM181176">
    <property type="protein sequence ID" value="CAY52047.1"/>
    <property type="molecule type" value="Genomic_DNA"/>
</dbReference>
<dbReference type="RefSeq" id="WP_015885739.1">
    <property type="nucleotide sequence ID" value="NC_012660.1"/>
</dbReference>
<dbReference type="SMR" id="C3K1L4"/>
<dbReference type="STRING" id="294.SRM1_04645"/>
<dbReference type="GeneID" id="93466671"/>
<dbReference type="eggNOG" id="COG0821">
    <property type="taxonomic scope" value="Bacteria"/>
</dbReference>
<dbReference type="HOGENOM" id="CLU_042258_0_0_6"/>
<dbReference type="OrthoDB" id="9803214at2"/>
<dbReference type="UniPathway" id="UPA00056">
    <property type="reaction ID" value="UER00096"/>
</dbReference>
<dbReference type="GO" id="GO:0051539">
    <property type="term" value="F:4 iron, 4 sulfur cluster binding"/>
    <property type="evidence" value="ECO:0007669"/>
    <property type="project" value="UniProtKB-UniRule"/>
</dbReference>
<dbReference type="GO" id="GO:0046429">
    <property type="term" value="F:4-hydroxy-3-methylbut-2-en-1-yl diphosphate synthase activity (ferredoxin)"/>
    <property type="evidence" value="ECO:0007669"/>
    <property type="project" value="UniProtKB-UniRule"/>
</dbReference>
<dbReference type="GO" id="GO:0141197">
    <property type="term" value="F:4-hydroxy-3-methylbut-2-enyl-diphosphate synthase activity (flavodoxin)"/>
    <property type="evidence" value="ECO:0007669"/>
    <property type="project" value="UniProtKB-EC"/>
</dbReference>
<dbReference type="GO" id="GO:0005506">
    <property type="term" value="F:iron ion binding"/>
    <property type="evidence" value="ECO:0007669"/>
    <property type="project" value="InterPro"/>
</dbReference>
<dbReference type="GO" id="GO:0019288">
    <property type="term" value="P:isopentenyl diphosphate biosynthetic process, methylerythritol 4-phosphate pathway"/>
    <property type="evidence" value="ECO:0007669"/>
    <property type="project" value="UniProtKB-UniRule"/>
</dbReference>
<dbReference type="GO" id="GO:0016114">
    <property type="term" value="P:terpenoid biosynthetic process"/>
    <property type="evidence" value="ECO:0007669"/>
    <property type="project" value="InterPro"/>
</dbReference>
<dbReference type="FunFam" id="3.20.20.20:FF:000001">
    <property type="entry name" value="4-hydroxy-3-methylbut-2-en-1-yl diphosphate synthase (flavodoxin)"/>
    <property type="match status" value="1"/>
</dbReference>
<dbReference type="Gene3D" id="3.20.20.20">
    <property type="entry name" value="Dihydropteroate synthase-like"/>
    <property type="match status" value="1"/>
</dbReference>
<dbReference type="Gene3D" id="3.30.413.10">
    <property type="entry name" value="Sulfite Reductase Hemoprotein, domain 1"/>
    <property type="match status" value="1"/>
</dbReference>
<dbReference type="HAMAP" id="MF_00159">
    <property type="entry name" value="IspG"/>
    <property type="match status" value="1"/>
</dbReference>
<dbReference type="InterPro" id="IPR011005">
    <property type="entry name" value="Dihydropteroate_synth-like_sf"/>
</dbReference>
<dbReference type="InterPro" id="IPR016425">
    <property type="entry name" value="IspG_bac"/>
</dbReference>
<dbReference type="InterPro" id="IPR004588">
    <property type="entry name" value="IspG_bac-typ"/>
</dbReference>
<dbReference type="InterPro" id="IPR045854">
    <property type="entry name" value="NO2/SO3_Rdtase_4Fe4S_sf"/>
</dbReference>
<dbReference type="NCBIfam" id="TIGR00612">
    <property type="entry name" value="ispG_gcpE"/>
    <property type="match status" value="1"/>
</dbReference>
<dbReference type="NCBIfam" id="NF001540">
    <property type="entry name" value="PRK00366.1"/>
    <property type="match status" value="1"/>
</dbReference>
<dbReference type="PANTHER" id="PTHR30454">
    <property type="entry name" value="4-HYDROXY-3-METHYLBUT-2-EN-1-YL DIPHOSPHATE SYNTHASE"/>
    <property type="match status" value="1"/>
</dbReference>
<dbReference type="PANTHER" id="PTHR30454:SF0">
    <property type="entry name" value="4-HYDROXY-3-METHYLBUT-2-EN-1-YL DIPHOSPHATE SYNTHASE (FERREDOXIN), CHLOROPLASTIC"/>
    <property type="match status" value="1"/>
</dbReference>
<dbReference type="Pfam" id="PF04551">
    <property type="entry name" value="GcpE"/>
    <property type="match status" value="1"/>
</dbReference>
<dbReference type="PIRSF" id="PIRSF004640">
    <property type="entry name" value="IspG"/>
    <property type="match status" value="1"/>
</dbReference>
<dbReference type="SUPFAM" id="SSF51412">
    <property type="entry name" value="Inosine monophosphate dehydrogenase (IMPDH)"/>
    <property type="match status" value="1"/>
</dbReference>
<dbReference type="SUPFAM" id="SSF56014">
    <property type="entry name" value="Nitrite and sulphite reductase 4Fe-4S domain-like"/>
    <property type="match status" value="1"/>
</dbReference>
<accession>C3K1L4</accession>
<comment type="function">
    <text evidence="1">Converts 2C-methyl-D-erythritol 2,4-cyclodiphosphate (ME-2,4cPP) into 1-hydroxy-2-methyl-2-(E)-butenyl 4-diphosphate.</text>
</comment>
<comment type="catalytic activity">
    <reaction evidence="1">
        <text>(2E)-4-hydroxy-3-methylbut-2-enyl diphosphate + oxidized [flavodoxin] + H2O + 2 H(+) = 2-C-methyl-D-erythritol 2,4-cyclic diphosphate + reduced [flavodoxin]</text>
        <dbReference type="Rhea" id="RHEA:43604"/>
        <dbReference type="Rhea" id="RHEA-COMP:10622"/>
        <dbReference type="Rhea" id="RHEA-COMP:10623"/>
        <dbReference type="ChEBI" id="CHEBI:15377"/>
        <dbReference type="ChEBI" id="CHEBI:15378"/>
        <dbReference type="ChEBI" id="CHEBI:57618"/>
        <dbReference type="ChEBI" id="CHEBI:58210"/>
        <dbReference type="ChEBI" id="CHEBI:58483"/>
        <dbReference type="ChEBI" id="CHEBI:128753"/>
        <dbReference type="EC" id="1.17.7.3"/>
    </reaction>
</comment>
<comment type="cofactor">
    <cofactor evidence="1">
        <name>[4Fe-4S] cluster</name>
        <dbReference type="ChEBI" id="CHEBI:49883"/>
    </cofactor>
    <text evidence="1">Binds 1 [4Fe-4S] cluster.</text>
</comment>
<comment type="pathway">
    <text evidence="1">Isoprenoid biosynthesis; isopentenyl diphosphate biosynthesis via DXP pathway; isopentenyl diphosphate from 1-deoxy-D-xylulose 5-phosphate: step 5/6.</text>
</comment>
<comment type="similarity">
    <text evidence="1">Belongs to the IspG family.</text>
</comment>
<evidence type="ECO:0000255" key="1">
    <source>
        <dbReference type="HAMAP-Rule" id="MF_00159"/>
    </source>
</evidence>
<protein>
    <recommendedName>
        <fullName evidence="1">4-hydroxy-3-methylbut-2-en-1-yl diphosphate synthase (flavodoxin)</fullName>
        <ecNumber evidence="1">1.17.7.3</ecNumber>
    </recommendedName>
    <alternativeName>
        <fullName evidence="1">1-hydroxy-2-methyl-2-(E)-butenyl 4-diphosphate synthase</fullName>
    </alternativeName>
</protein>
<keyword id="KW-0004">4Fe-4S</keyword>
<keyword id="KW-0408">Iron</keyword>
<keyword id="KW-0411">Iron-sulfur</keyword>
<keyword id="KW-0414">Isoprene biosynthesis</keyword>
<keyword id="KW-0479">Metal-binding</keyword>
<keyword id="KW-0560">Oxidoreductase</keyword>